<protein>
    <recommendedName>
        <fullName evidence="2">Small ribosomal subunit protein uS12</fullName>
    </recommendedName>
    <alternativeName>
        <fullName evidence="3">30S ribosomal protein S12</fullName>
    </alternativeName>
</protein>
<dbReference type="EMBL" id="CP000302">
    <property type="protein sequence ID" value="ABE53462.1"/>
    <property type="molecule type" value="Genomic_DNA"/>
</dbReference>
<dbReference type="RefSeq" id="WP_011494631.1">
    <property type="nucleotide sequence ID" value="NC_007954.1"/>
</dbReference>
<dbReference type="SMR" id="Q12SW4"/>
<dbReference type="STRING" id="318161.Sden_0165"/>
<dbReference type="KEGG" id="sdn:Sden_0165"/>
<dbReference type="eggNOG" id="COG0048">
    <property type="taxonomic scope" value="Bacteria"/>
</dbReference>
<dbReference type="HOGENOM" id="CLU_104295_1_2_6"/>
<dbReference type="OrthoDB" id="9802366at2"/>
<dbReference type="Proteomes" id="UP000001982">
    <property type="component" value="Chromosome"/>
</dbReference>
<dbReference type="GO" id="GO:0015935">
    <property type="term" value="C:small ribosomal subunit"/>
    <property type="evidence" value="ECO:0007669"/>
    <property type="project" value="InterPro"/>
</dbReference>
<dbReference type="GO" id="GO:0019843">
    <property type="term" value="F:rRNA binding"/>
    <property type="evidence" value="ECO:0007669"/>
    <property type="project" value="UniProtKB-UniRule"/>
</dbReference>
<dbReference type="GO" id="GO:0003735">
    <property type="term" value="F:structural constituent of ribosome"/>
    <property type="evidence" value="ECO:0007669"/>
    <property type="project" value="InterPro"/>
</dbReference>
<dbReference type="GO" id="GO:0000049">
    <property type="term" value="F:tRNA binding"/>
    <property type="evidence" value="ECO:0007669"/>
    <property type="project" value="UniProtKB-UniRule"/>
</dbReference>
<dbReference type="GO" id="GO:0006412">
    <property type="term" value="P:translation"/>
    <property type="evidence" value="ECO:0007669"/>
    <property type="project" value="UniProtKB-UniRule"/>
</dbReference>
<dbReference type="CDD" id="cd03368">
    <property type="entry name" value="Ribosomal_S12"/>
    <property type="match status" value="1"/>
</dbReference>
<dbReference type="FunFam" id="2.40.50.140:FF:000001">
    <property type="entry name" value="30S ribosomal protein S12"/>
    <property type="match status" value="1"/>
</dbReference>
<dbReference type="Gene3D" id="2.40.50.140">
    <property type="entry name" value="Nucleic acid-binding proteins"/>
    <property type="match status" value="1"/>
</dbReference>
<dbReference type="HAMAP" id="MF_00403_B">
    <property type="entry name" value="Ribosomal_uS12_B"/>
    <property type="match status" value="1"/>
</dbReference>
<dbReference type="InterPro" id="IPR012340">
    <property type="entry name" value="NA-bd_OB-fold"/>
</dbReference>
<dbReference type="InterPro" id="IPR006032">
    <property type="entry name" value="Ribosomal_uS12"/>
</dbReference>
<dbReference type="InterPro" id="IPR005679">
    <property type="entry name" value="Ribosomal_uS12_bac"/>
</dbReference>
<dbReference type="NCBIfam" id="TIGR00981">
    <property type="entry name" value="rpsL_bact"/>
    <property type="match status" value="1"/>
</dbReference>
<dbReference type="PANTHER" id="PTHR11652">
    <property type="entry name" value="30S RIBOSOMAL PROTEIN S12 FAMILY MEMBER"/>
    <property type="match status" value="1"/>
</dbReference>
<dbReference type="Pfam" id="PF00164">
    <property type="entry name" value="Ribosom_S12_S23"/>
    <property type="match status" value="1"/>
</dbReference>
<dbReference type="PIRSF" id="PIRSF002133">
    <property type="entry name" value="Ribosomal_S12/S23"/>
    <property type="match status" value="1"/>
</dbReference>
<dbReference type="PRINTS" id="PR01034">
    <property type="entry name" value="RIBOSOMALS12"/>
</dbReference>
<dbReference type="SUPFAM" id="SSF50249">
    <property type="entry name" value="Nucleic acid-binding proteins"/>
    <property type="match status" value="1"/>
</dbReference>
<dbReference type="PROSITE" id="PS00055">
    <property type="entry name" value="RIBOSOMAL_S12"/>
    <property type="match status" value="1"/>
</dbReference>
<reference key="1">
    <citation type="submission" date="2006-03" db="EMBL/GenBank/DDBJ databases">
        <title>Complete sequence of Shewanella denitrificans OS217.</title>
        <authorList>
            <consortium name="US DOE Joint Genome Institute"/>
            <person name="Copeland A."/>
            <person name="Lucas S."/>
            <person name="Lapidus A."/>
            <person name="Barry K."/>
            <person name="Detter J.C."/>
            <person name="Glavina del Rio T."/>
            <person name="Hammon N."/>
            <person name="Israni S."/>
            <person name="Dalin E."/>
            <person name="Tice H."/>
            <person name="Pitluck S."/>
            <person name="Brettin T."/>
            <person name="Bruce D."/>
            <person name="Han C."/>
            <person name="Tapia R."/>
            <person name="Gilna P."/>
            <person name="Kiss H."/>
            <person name="Schmutz J."/>
            <person name="Larimer F."/>
            <person name="Land M."/>
            <person name="Hauser L."/>
            <person name="Kyrpides N."/>
            <person name="Lykidis A."/>
            <person name="Richardson P."/>
        </authorList>
    </citation>
    <scope>NUCLEOTIDE SEQUENCE [LARGE SCALE GENOMIC DNA]</scope>
    <source>
        <strain>OS217 / ATCC BAA-1090 / DSM 15013</strain>
    </source>
</reference>
<feature type="chain" id="PRO_0000263589" description="Small ribosomal subunit protein uS12">
    <location>
        <begin position="1"/>
        <end position="124"/>
    </location>
</feature>
<feature type="modified residue" description="3-methylthioaspartic acid" evidence="1">
    <location>
        <position position="89"/>
    </location>
</feature>
<proteinExistence type="inferred from homology"/>
<accession>Q12SW4</accession>
<gene>
    <name evidence="2" type="primary">rpsL</name>
    <name type="ordered locus">Sden_0165</name>
</gene>
<comment type="function">
    <text evidence="2">With S4 and S5 plays an important role in translational accuracy.</text>
</comment>
<comment type="function">
    <text evidence="2">Interacts with and stabilizes bases of the 16S rRNA that are involved in tRNA selection in the A site and with the mRNA backbone. Located at the interface of the 30S and 50S subunits, it traverses the body of the 30S subunit contacting proteins on the other side and probably holding the rRNA structure together. The combined cluster of proteins S8, S12 and S17 appears to hold together the shoulder and platform of the 30S subunit.</text>
</comment>
<comment type="subunit">
    <text evidence="2">Part of the 30S ribosomal subunit. Contacts proteins S8 and S17. May interact with IF1 in the 30S initiation complex.</text>
</comment>
<comment type="similarity">
    <text evidence="2">Belongs to the universal ribosomal protein uS12 family.</text>
</comment>
<name>RS12_SHEDO</name>
<sequence>MATVNQLVRKPRAPKVEKTNVPALNACPQKRGVCTRVYTTTPKKPNSALRKVARVRLTNGFEVTSYIGGEGHNLQEHSVILIRGGRVKDLPGVRYHTVRGALDCAGVNTRRQGRSKYGAKRPKS</sequence>
<evidence type="ECO:0000250" key="1"/>
<evidence type="ECO:0000255" key="2">
    <source>
        <dbReference type="HAMAP-Rule" id="MF_00403"/>
    </source>
</evidence>
<evidence type="ECO:0000305" key="3"/>
<organism>
    <name type="scientific">Shewanella denitrificans (strain OS217 / ATCC BAA-1090 / DSM 15013)</name>
    <dbReference type="NCBI Taxonomy" id="318161"/>
    <lineage>
        <taxon>Bacteria</taxon>
        <taxon>Pseudomonadati</taxon>
        <taxon>Pseudomonadota</taxon>
        <taxon>Gammaproteobacteria</taxon>
        <taxon>Alteromonadales</taxon>
        <taxon>Shewanellaceae</taxon>
        <taxon>Shewanella</taxon>
    </lineage>
</organism>
<keyword id="KW-0488">Methylation</keyword>
<keyword id="KW-1185">Reference proteome</keyword>
<keyword id="KW-0687">Ribonucleoprotein</keyword>
<keyword id="KW-0689">Ribosomal protein</keyword>
<keyword id="KW-0694">RNA-binding</keyword>
<keyword id="KW-0699">rRNA-binding</keyword>
<keyword id="KW-0820">tRNA-binding</keyword>